<name>HIS1_ACIAD</name>
<gene>
    <name evidence="1" type="primary">hisG</name>
    <name type="ordered locus">ACIAD0661</name>
</gene>
<reference key="1">
    <citation type="journal article" date="2004" name="Nucleic Acids Res.">
        <title>Unique features revealed by the genome sequence of Acinetobacter sp. ADP1, a versatile and naturally transformation competent bacterium.</title>
        <authorList>
            <person name="Barbe V."/>
            <person name="Vallenet D."/>
            <person name="Fonknechten N."/>
            <person name="Kreimeyer A."/>
            <person name="Oztas S."/>
            <person name="Labarre L."/>
            <person name="Cruveiller S."/>
            <person name="Robert C."/>
            <person name="Duprat S."/>
            <person name="Wincker P."/>
            <person name="Ornston L.N."/>
            <person name="Weissenbach J."/>
            <person name="Marliere P."/>
            <person name="Cohen G.N."/>
            <person name="Medigue C."/>
        </authorList>
    </citation>
    <scope>NUCLEOTIDE SEQUENCE [LARGE SCALE GENOMIC DNA]</scope>
    <source>
        <strain>ATCC 33305 / BD413 / ADP1</strain>
    </source>
</reference>
<feature type="chain" id="PRO_0000229300" description="ATP phosphoribosyltransferase">
    <location>
        <begin position="1"/>
        <end position="228"/>
    </location>
</feature>
<sequence length="228" mass="25270">MMNDMRNDDPNFNVMGNFDHGLTLALSKGRILKETLPLLEAAGINLLEDPEKSRKLIFPTTHQKVRILILRASDVPTYVENGAADFGVAGKDVLMEHGAQHVYELLDLKIANCKLMTAGKVGMQHPKGRLKIATKYVNLTRQYYASLGEQVDVIKLYGSMELAPLVGLGDYIVDVVDTGNTLRANGLEPLEEIMKVSSRLIVNKASFKRKQALLDPILAQVEEAVNQR</sequence>
<keyword id="KW-0028">Amino-acid biosynthesis</keyword>
<keyword id="KW-0067">ATP-binding</keyword>
<keyword id="KW-0963">Cytoplasm</keyword>
<keyword id="KW-0328">Glycosyltransferase</keyword>
<keyword id="KW-0368">Histidine biosynthesis</keyword>
<keyword id="KW-0547">Nucleotide-binding</keyword>
<keyword id="KW-0808">Transferase</keyword>
<protein>
    <recommendedName>
        <fullName evidence="1">ATP phosphoribosyltransferase</fullName>
        <shortName evidence="1">ATP-PRT</shortName>
        <shortName evidence="1">ATP-PRTase</shortName>
        <ecNumber evidence="1">2.4.2.17</ecNumber>
    </recommendedName>
</protein>
<comment type="function">
    <text evidence="1">Catalyzes the condensation of ATP and 5-phosphoribose 1-diphosphate to form N'-(5'-phosphoribosyl)-ATP (PR-ATP). Has a crucial role in the pathway because the rate of histidine biosynthesis seems to be controlled primarily by regulation of HisG enzymatic activity.</text>
</comment>
<comment type="catalytic activity">
    <reaction evidence="1">
        <text>1-(5-phospho-beta-D-ribosyl)-ATP + diphosphate = 5-phospho-alpha-D-ribose 1-diphosphate + ATP</text>
        <dbReference type="Rhea" id="RHEA:18473"/>
        <dbReference type="ChEBI" id="CHEBI:30616"/>
        <dbReference type="ChEBI" id="CHEBI:33019"/>
        <dbReference type="ChEBI" id="CHEBI:58017"/>
        <dbReference type="ChEBI" id="CHEBI:73183"/>
        <dbReference type="EC" id="2.4.2.17"/>
    </reaction>
</comment>
<comment type="pathway">
    <text evidence="1">Amino-acid biosynthesis; L-histidine biosynthesis; L-histidine from 5-phospho-alpha-D-ribose 1-diphosphate: step 1/9.</text>
</comment>
<comment type="subunit">
    <text evidence="1">Heteromultimer composed of HisG and HisZ subunits.</text>
</comment>
<comment type="subcellular location">
    <subcellularLocation>
        <location evidence="1">Cytoplasm</location>
    </subcellularLocation>
</comment>
<comment type="domain">
    <text>Lacks the C-terminal regulatory region which is replaced by HisZ.</text>
</comment>
<comment type="similarity">
    <text evidence="1">Belongs to the ATP phosphoribosyltransferase family. Short subfamily.</text>
</comment>
<proteinExistence type="inferred from homology"/>
<dbReference type="EC" id="2.4.2.17" evidence="1"/>
<dbReference type="EMBL" id="CR543861">
    <property type="protein sequence ID" value="CAG67579.1"/>
    <property type="molecule type" value="Genomic_DNA"/>
</dbReference>
<dbReference type="SMR" id="Q6FEC9"/>
<dbReference type="STRING" id="202950.GCA_001485005_02430"/>
<dbReference type="KEGG" id="aci:ACIAD0661"/>
<dbReference type="eggNOG" id="COG0040">
    <property type="taxonomic scope" value="Bacteria"/>
</dbReference>
<dbReference type="HOGENOM" id="CLU_038115_2_0_6"/>
<dbReference type="UniPathway" id="UPA00031">
    <property type="reaction ID" value="UER00006"/>
</dbReference>
<dbReference type="Proteomes" id="UP000000430">
    <property type="component" value="Chromosome"/>
</dbReference>
<dbReference type="GO" id="GO:0005737">
    <property type="term" value="C:cytoplasm"/>
    <property type="evidence" value="ECO:0007669"/>
    <property type="project" value="UniProtKB-SubCell"/>
</dbReference>
<dbReference type="GO" id="GO:0005524">
    <property type="term" value="F:ATP binding"/>
    <property type="evidence" value="ECO:0007669"/>
    <property type="project" value="UniProtKB-KW"/>
</dbReference>
<dbReference type="GO" id="GO:0003879">
    <property type="term" value="F:ATP phosphoribosyltransferase activity"/>
    <property type="evidence" value="ECO:0007669"/>
    <property type="project" value="UniProtKB-UniRule"/>
</dbReference>
<dbReference type="GO" id="GO:0000105">
    <property type="term" value="P:L-histidine biosynthetic process"/>
    <property type="evidence" value="ECO:0007669"/>
    <property type="project" value="UniProtKB-UniRule"/>
</dbReference>
<dbReference type="CDD" id="cd13595">
    <property type="entry name" value="PBP2_HisGs"/>
    <property type="match status" value="1"/>
</dbReference>
<dbReference type="FunFam" id="3.40.190.10:FF:000011">
    <property type="entry name" value="ATP phosphoribosyltransferase"/>
    <property type="match status" value="1"/>
</dbReference>
<dbReference type="Gene3D" id="3.40.190.10">
    <property type="entry name" value="Periplasmic binding protein-like II"/>
    <property type="match status" value="2"/>
</dbReference>
<dbReference type="HAMAP" id="MF_01018">
    <property type="entry name" value="HisG_Short"/>
    <property type="match status" value="1"/>
</dbReference>
<dbReference type="InterPro" id="IPR013820">
    <property type="entry name" value="ATP_PRibTrfase_cat"/>
</dbReference>
<dbReference type="InterPro" id="IPR018198">
    <property type="entry name" value="ATP_PRibTrfase_CS"/>
</dbReference>
<dbReference type="InterPro" id="IPR001348">
    <property type="entry name" value="ATP_PRibTrfase_HisG"/>
</dbReference>
<dbReference type="InterPro" id="IPR024893">
    <property type="entry name" value="ATP_PRibTrfase_HisG_short"/>
</dbReference>
<dbReference type="NCBIfam" id="TIGR00070">
    <property type="entry name" value="hisG"/>
    <property type="match status" value="1"/>
</dbReference>
<dbReference type="PANTHER" id="PTHR21403:SF8">
    <property type="entry name" value="ATP PHOSPHORIBOSYLTRANSFERASE"/>
    <property type="match status" value="1"/>
</dbReference>
<dbReference type="PANTHER" id="PTHR21403">
    <property type="entry name" value="ATP PHOSPHORIBOSYLTRANSFERASE ATP-PRTASE"/>
    <property type="match status" value="1"/>
</dbReference>
<dbReference type="Pfam" id="PF01634">
    <property type="entry name" value="HisG"/>
    <property type="match status" value="1"/>
</dbReference>
<dbReference type="SUPFAM" id="SSF53850">
    <property type="entry name" value="Periplasmic binding protein-like II"/>
    <property type="match status" value="1"/>
</dbReference>
<dbReference type="PROSITE" id="PS01316">
    <property type="entry name" value="ATP_P_PHORIBOSYLTR"/>
    <property type="match status" value="1"/>
</dbReference>
<accession>Q6FEC9</accession>
<evidence type="ECO:0000255" key="1">
    <source>
        <dbReference type="HAMAP-Rule" id="MF_01018"/>
    </source>
</evidence>
<organism>
    <name type="scientific">Acinetobacter baylyi (strain ATCC 33305 / BD413 / ADP1)</name>
    <dbReference type="NCBI Taxonomy" id="62977"/>
    <lineage>
        <taxon>Bacteria</taxon>
        <taxon>Pseudomonadati</taxon>
        <taxon>Pseudomonadota</taxon>
        <taxon>Gammaproteobacteria</taxon>
        <taxon>Moraxellales</taxon>
        <taxon>Moraxellaceae</taxon>
        <taxon>Acinetobacter</taxon>
    </lineage>
</organism>